<dbReference type="EMBL" id="AJ401189">
    <property type="protein sequence ID" value="CAC37685.1"/>
    <property type="molecule type" value="mRNA"/>
</dbReference>
<dbReference type="EMBL" id="ABBA01041227">
    <property type="status" value="NOT_ANNOTATED_CDS"/>
    <property type="molecule type" value="Genomic_DNA"/>
</dbReference>
<dbReference type="EMBL" id="AC002401">
    <property type="status" value="NOT_ANNOTATED_CDS"/>
    <property type="molecule type" value="Genomic_DNA"/>
</dbReference>
<dbReference type="EMBL" id="KF495721">
    <property type="status" value="NOT_ANNOTATED_CDS"/>
    <property type="molecule type" value="Genomic_DNA"/>
</dbReference>
<dbReference type="EMBL" id="CH471109">
    <property type="protein sequence ID" value="EAW94638.1"/>
    <property type="molecule type" value="Genomic_DNA"/>
</dbReference>
<dbReference type="EMBL" id="CH471109">
    <property type="protein sequence ID" value="EAW94637.1"/>
    <property type="molecule type" value="Genomic_DNA"/>
</dbReference>
<dbReference type="EMBL" id="AL713642">
    <property type="protein sequence ID" value="CAD28455.2"/>
    <property type="molecule type" value="mRNA"/>
</dbReference>
<dbReference type="CCDS" id="CCDS74102.1"/>
<dbReference type="RefSeq" id="NP_115984.3">
    <property type="nucleotide sequence ID" value="NM_032595.5"/>
</dbReference>
<dbReference type="BMRB" id="Q96SB3"/>
<dbReference type="SMR" id="Q96SB3"/>
<dbReference type="BioGRID" id="124202">
    <property type="interactions" value="218"/>
</dbReference>
<dbReference type="CORUM" id="Q96SB3"/>
<dbReference type="FunCoup" id="Q96SB3">
    <property type="interactions" value="1322"/>
</dbReference>
<dbReference type="IntAct" id="Q96SB3">
    <property type="interactions" value="101"/>
</dbReference>
<dbReference type="MINT" id="Q96SB3"/>
<dbReference type="STRING" id="9606.ENSP00000478767"/>
<dbReference type="GlyGen" id="Q96SB3">
    <property type="glycosylation" value="2 sites, 1 O-linked glycan (1 site)"/>
</dbReference>
<dbReference type="iPTMnet" id="Q96SB3"/>
<dbReference type="PhosphoSitePlus" id="Q96SB3"/>
<dbReference type="BioMuta" id="PPP1R9B"/>
<dbReference type="DMDM" id="90101416"/>
<dbReference type="jPOST" id="Q96SB3"/>
<dbReference type="MassIVE" id="Q96SB3"/>
<dbReference type="PaxDb" id="9606-ENSP00000478767"/>
<dbReference type="PeptideAtlas" id="Q96SB3"/>
<dbReference type="ProteomicsDB" id="78097"/>
<dbReference type="Pumba" id="Q96SB3"/>
<dbReference type="Antibodypedia" id="30484">
    <property type="antibodies" value="155 antibodies from 28 providers"/>
</dbReference>
<dbReference type="DNASU" id="84687"/>
<dbReference type="Ensembl" id="ENST00000612501.2">
    <property type="protein sequence ID" value="ENSP00000478767.1"/>
    <property type="gene ID" value="ENSG00000108819.11"/>
</dbReference>
<dbReference type="GeneID" id="84687"/>
<dbReference type="KEGG" id="hsa:84687"/>
<dbReference type="MANE-Select" id="ENST00000612501.2">
    <property type="protein sequence ID" value="ENSP00000478767.1"/>
    <property type="RefSeq nucleotide sequence ID" value="NM_032595.5"/>
    <property type="RefSeq protein sequence ID" value="NP_115984.3"/>
</dbReference>
<dbReference type="UCSC" id="uc032fmj.2">
    <property type="organism name" value="human"/>
</dbReference>
<dbReference type="AGR" id="HGNC:9298"/>
<dbReference type="CTD" id="84687"/>
<dbReference type="DisGeNET" id="84687"/>
<dbReference type="GeneCards" id="PPP1R9B"/>
<dbReference type="HGNC" id="HGNC:9298">
    <property type="gene designation" value="PPP1R9B"/>
</dbReference>
<dbReference type="HPA" id="ENSG00000108819">
    <property type="expression patterns" value="Tissue enhanced (brain)"/>
</dbReference>
<dbReference type="MIM" id="603325">
    <property type="type" value="gene"/>
</dbReference>
<dbReference type="neXtProt" id="NX_Q96SB3"/>
<dbReference type="OpenTargets" id="ENSG00000108819"/>
<dbReference type="PharmGKB" id="PA33662"/>
<dbReference type="VEuPathDB" id="HostDB:ENSG00000108819"/>
<dbReference type="eggNOG" id="KOG1945">
    <property type="taxonomic scope" value="Eukaryota"/>
</dbReference>
<dbReference type="GeneTree" id="ENSGT00940000158833"/>
<dbReference type="HOGENOM" id="CLU_007401_1_0_1"/>
<dbReference type="InParanoid" id="Q96SB3"/>
<dbReference type="OMA" id="KVPHHKK"/>
<dbReference type="OrthoDB" id="62701at2759"/>
<dbReference type="PAN-GO" id="Q96SB3">
    <property type="GO annotations" value="8 GO annotations based on evolutionary models"/>
</dbReference>
<dbReference type="PhylomeDB" id="Q96SB3"/>
<dbReference type="PathwayCommons" id="Q96SB3"/>
<dbReference type="SignaLink" id="Q96SB3"/>
<dbReference type="SIGNOR" id="Q96SB3"/>
<dbReference type="BioGRID-ORCS" id="84687">
    <property type="hits" value="17 hits in 307 CRISPR screens"/>
</dbReference>
<dbReference type="CD-CODE" id="FB4E32DD">
    <property type="entry name" value="Presynaptic clusters and postsynaptic densities"/>
</dbReference>
<dbReference type="ChiTaRS" id="PPP1R9B">
    <property type="organism name" value="human"/>
</dbReference>
<dbReference type="GeneWiki" id="PPP1R9B"/>
<dbReference type="GenomeRNAi" id="84687"/>
<dbReference type="Pharos" id="Q96SB3">
    <property type="development level" value="Tbio"/>
</dbReference>
<dbReference type="PRO" id="PR:Q96SB3"/>
<dbReference type="Proteomes" id="UP000005640">
    <property type="component" value="Chromosome 17"/>
</dbReference>
<dbReference type="RNAct" id="Q96SB3">
    <property type="molecule type" value="protein"/>
</dbReference>
<dbReference type="Bgee" id="ENSG00000108819">
    <property type="expression patterns" value="Expressed in right hemisphere of cerebellum and 163 other cell types or tissues"/>
</dbReference>
<dbReference type="GO" id="GO:0015629">
    <property type="term" value="C:actin cytoskeleton"/>
    <property type="evidence" value="ECO:0000318"/>
    <property type="project" value="GO_Central"/>
</dbReference>
<dbReference type="GO" id="GO:0005912">
    <property type="term" value="C:adherens junction"/>
    <property type="evidence" value="ECO:0007669"/>
    <property type="project" value="UniProtKB-SubCell"/>
</dbReference>
<dbReference type="GO" id="GO:0030864">
    <property type="term" value="C:cortical actin cytoskeleton"/>
    <property type="evidence" value="ECO:0007669"/>
    <property type="project" value="Ensembl"/>
</dbReference>
<dbReference type="GO" id="GO:0005737">
    <property type="term" value="C:cytoplasm"/>
    <property type="evidence" value="ECO:0000314"/>
    <property type="project" value="UniProtKB"/>
</dbReference>
<dbReference type="GO" id="GO:1990780">
    <property type="term" value="C:cytoplasmic side of dendritic spine plasma membrane"/>
    <property type="evidence" value="ECO:0007669"/>
    <property type="project" value="Ensembl"/>
</dbReference>
<dbReference type="GO" id="GO:0030425">
    <property type="term" value="C:dendrite"/>
    <property type="evidence" value="ECO:0000318"/>
    <property type="project" value="GO_Central"/>
</dbReference>
<dbReference type="GO" id="GO:0044327">
    <property type="term" value="C:dendritic spine head"/>
    <property type="evidence" value="ECO:0007669"/>
    <property type="project" value="Ensembl"/>
</dbReference>
<dbReference type="GO" id="GO:0044326">
    <property type="term" value="C:dendritic spine neck"/>
    <property type="evidence" value="ECO:0007669"/>
    <property type="project" value="Ensembl"/>
</dbReference>
<dbReference type="GO" id="GO:0098890">
    <property type="term" value="C:extrinsic component of postsynaptic membrane"/>
    <property type="evidence" value="ECO:0007669"/>
    <property type="project" value="Ensembl"/>
</dbReference>
<dbReference type="GO" id="GO:0030175">
    <property type="term" value="C:filopodium"/>
    <property type="evidence" value="ECO:0000314"/>
    <property type="project" value="UniProtKB"/>
</dbReference>
<dbReference type="GO" id="GO:0098978">
    <property type="term" value="C:glutamatergic synapse"/>
    <property type="evidence" value="ECO:0007669"/>
    <property type="project" value="Ensembl"/>
</dbReference>
<dbReference type="GO" id="GO:0030426">
    <property type="term" value="C:growth cone"/>
    <property type="evidence" value="ECO:0007669"/>
    <property type="project" value="Ensembl"/>
</dbReference>
<dbReference type="GO" id="GO:0030027">
    <property type="term" value="C:lamellipodium"/>
    <property type="evidence" value="ECO:0000314"/>
    <property type="project" value="UniProtKB"/>
</dbReference>
<dbReference type="GO" id="GO:0043025">
    <property type="term" value="C:neuronal cell body"/>
    <property type="evidence" value="ECO:0007669"/>
    <property type="project" value="Ensembl"/>
</dbReference>
<dbReference type="GO" id="GO:0005654">
    <property type="term" value="C:nucleoplasm"/>
    <property type="evidence" value="ECO:0000315"/>
    <property type="project" value="UniProtKB"/>
</dbReference>
<dbReference type="GO" id="GO:0005886">
    <property type="term" value="C:plasma membrane"/>
    <property type="evidence" value="ECO:0000314"/>
    <property type="project" value="UniProtKB"/>
</dbReference>
<dbReference type="GO" id="GO:0014069">
    <property type="term" value="C:postsynaptic density"/>
    <property type="evidence" value="ECO:0000318"/>
    <property type="project" value="GO_Central"/>
</dbReference>
<dbReference type="GO" id="GO:0000164">
    <property type="term" value="C:protein phosphatase type 1 complex"/>
    <property type="evidence" value="ECO:0000304"/>
    <property type="project" value="UniProtKB"/>
</dbReference>
<dbReference type="GO" id="GO:0032587">
    <property type="term" value="C:ruffle membrane"/>
    <property type="evidence" value="ECO:0000314"/>
    <property type="project" value="UniProtKB"/>
</dbReference>
<dbReference type="GO" id="GO:0097444">
    <property type="term" value="C:spine apparatus"/>
    <property type="evidence" value="ECO:0007669"/>
    <property type="project" value="Ensembl"/>
</dbReference>
<dbReference type="GO" id="GO:0051015">
    <property type="term" value="F:actin filament binding"/>
    <property type="evidence" value="ECO:0000318"/>
    <property type="project" value="GO_Central"/>
</dbReference>
<dbReference type="GO" id="GO:0031749">
    <property type="term" value="F:D2 dopamine receptor binding"/>
    <property type="evidence" value="ECO:0007669"/>
    <property type="project" value="Ensembl"/>
</dbReference>
<dbReference type="GO" id="GO:0019900">
    <property type="term" value="F:kinase binding"/>
    <property type="evidence" value="ECO:0007669"/>
    <property type="project" value="Ensembl"/>
</dbReference>
<dbReference type="GO" id="GO:0004672">
    <property type="term" value="F:protein kinase activity"/>
    <property type="evidence" value="ECO:0007669"/>
    <property type="project" value="Ensembl"/>
</dbReference>
<dbReference type="GO" id="GO:0008157">
    <property type="term" value="F:protein phosphatase 1 binding"/>
    <property type="evidence" value="ECO:0000303"/>
    <property type="project" value="UniProtKB"/>
</dbReference>
<dbReference type="GO" id="GO:0004864">
    <property type="term" value="F:protein phosphatase inhibitor activity"/>
    <property type="evidence" value="ECO:0000303"/>
    <property type="project" value="UniProtKB"/>
</dbReference>
<dbReference type="GO" id="GO:0044325">
    <property type="term" value="F:transmembrane transporter binding"/>
    <property type="evidence" value="ECO:0007669"/>
    <property type="project" value="Ensembl"/>
</dbReference>
<dbReference type="GO" id="GO:0030042">
    <property type="term" value="P:actin filament depolymerization"/>
    <property type="evidence" value="ECO:0007669"/>
    <property type="project" value="Ensembl"/>
</dbReference>
<dbReference type="GO" id="GO:0007015">
    <property type="term" value="P:actin filament organization"/>
    <property type="evidence" value="ECO:0000318"/>
    <property type="project" value="GO_Central"/>
</dbReference>
<dbReference type="GO" id="GO:0019722">
    <property type="term" value="P:calcium-mediated signaling"/>
    <property type="evidence" value="ECO:0000318"/>
    <property type="project" value="GO_Central"/>
</dbReference>
<dbReference type="GO" id="GO:0016477">
    <property type="term" value="P:cell migration"/>
    <property type="evidence" value="ECO:0000315"/>
    <property type="project" value="UniProtKB"/>
</dbReference>
<dbReference type="GO" id="GO:0071364">
    <property type="term" value="P:cellular response to epidermal growth factor stimulus"/>
    <property type="evidence" value="ECO:0007669"/>
    <property type="project" value="Ensembl"/>
</dbReference>
<dbReference type="GO" id="GO:0071392">
    <property type="term" value="P:cellular response to estradiol stimulus"/>
    <property type="evidence" value="ECO:0007669"/>
    <property type="project" value="Ensembl"/>
</dbReference>
<dbReference type="GO" id="GO:0071315">
    <property type="term" value="P:cellular response to morphine"/>
    <property type="evidence" value="ECO:0000250"/>
    <property type="project" value="UniProtKB"/>
</dbReference>
<dbReference type="GO" id="GO:1901653">
    <property type="term" value="P:cellular response to peptide"/>
    <property type="evidence" value="ECO:0007669"/>
    <property type="project" value="Ensembl"/>
</dbReference>
<dbReference type="GO" id="GO:0071466">
    <property type="term" value="P:cellular response to xenobiotic stimulus"/>
    <property type="evidence" value="ECO:0007669"/>
    <property type="project" value="Ensembl"/>
</dbReference>
<dbReference type="GO" id="GO:0021987">
    <property type="term" value="P:cerebral cortex development"/>
    <property type="evidence" value="ECO:0007669"/>
    <property type="project" value="Ensembl"/>
</dbReference>
<dbReference type="GO" id="GO:0016358">
    <property type="term" value="P:dendrite development"/>
    <property type="evidence" value="ECO:0007669"/>
    <property type="project" value="Ensembl"/>
</dbReference>
<dbReference type="GO" id="GO:0003006">
    <property type="term" value="P:developmental process involved in reproduction"/>
    <property type="evidence" value="ECO:0007669"/>
    <property type="project" value="Ensembl"/>
</dbReference>
<dbReference type="GO" id="GO:0046847">
    <property type="term" value="P:filopodium assembly"/>
    <property type="evidence" value="ECO:0000315"/>
    <property type="project" value="UniProtKB"/>
</dbReference>
<dbReference type="GO" id="GO:0021766">
    <property type="term" value="P:hippocampus development"/>
    <property type="evidence" value="ECO:0007669"/>
    <property type="project" value="Ensembl"/>
</dbReference>
<dbReference type="GO" id="GO:0007612">
    <property type="term" value="P:learning"/>
    <property type="evidence" value="ECO:0007669"/>
    <property type="project" value="Ensembl"/>
</dbReference>
<dbReference type="GO" id="GO:0060179">
    <property type="term" value="P:male mating behavior"/>
    <property type="evidence" value="ECO:0007669"/>
    <property type="project" value="Ensembl"/>
</dbReference>
<dbReference type="GO" id="GO:0030308">
    <property type="term" value="P:negative regulation of cell growth"/>
    <property type="evidence" value="ECO:0000314"/>
    <property type="project" value="UniProtKB"/>
</dbReference>
<dbReference type="GO" id="GO:0031175">
    <property type="term" value="P:neuron projection development"/>
    <property type="evidence" value="ECO:0000318"/>
    <property type="project" value="GO_Central"/>
</dbReference>
<dbReference type="GO" id="GO:1904372">
    <property type="term" value="P:positive regulation of protein localization to actin cortical patch"/>
    <property type="evidence" value="ECO:0007669"/>
    <property type="project" value="Ensembl"/>
</dbReference>
<dbReference type="GO" id="GO:1903078">
    <property type="term" value="P:positive regulation of protein localization to plasma membrane"/>
    <property type="evidence" value="ECO:0007669"/>
    <property type="project" value="Ensembl"/>
</dbReference>
<dbReference type="GO" id="GO:1903119">
    <property type="term" value="P:protein localization to actin cytoskeleton"/>
    <property type="evidence" value="ECO:0007669"/>
    <property type="project" value="Ensembl"/>
</dbReference>
<dbReference type="GO" id="GO:1990778">
    <property type="term" value="P:protein localization to cell periphery"/>
    <property type="evidence" value="ECO:0007669"/>
    <property type="project" value="Ensembl"/>
</dbReference>
<dbReference type="GO" id="GO:0051726">
    <property type="term" value="P:regulation of cell cycle"/>
    <property type="evidence" value="ECO:0000304"/>
    <property type="project" value="UniProtKB"/>
</dbReference>
<dbReference type="GO" id="GO:0001560">
    <property type="term" value="P:regulation of cell growth by extracellular stimulus"/>
    <property type="evidence" value="ECO:0000304"/>
    <property type="project" value="UniProtKB"/>
</dbReference>
<dbReference type="GO" id="GO:0042127">
    <property type="term" value="P:regulation of cell population proliferation"/>
    <property type="evidence" value="ECO:0000303"/>
    <property type="project" value="UniProtKB"/>
</dbReference>
<dbReference type="GO" id="GO:0007096">
    <property type="term" value="P:regulation of exit from mitosis"/>
    <property type="evidence" value="ECO:0000303"/>
    <property type="project" value="UniProtKB"/>
</dbReference>
<dbReference type="GO" id="GO:2000474">
    <property type="term" value="P:regulation of opioid receptor signaling pathway"/>
    <property type="evidence" value="ECO:0000250"/>
    <property type="project" value="UniProtKB"/>
</dbReference>
<dbReference type="GO" id="GO:0150052">
    <property type="term" value="P:regulation of postsynapse assembly"/>
    <property type="evidence" value="ECO:0007669"/>
    <property type="project" value="Ensembl"/>
</dbReference>
<dbReference type="GO" id="GO:0061458">
    <property type="term" value="P:reproductive system development"/>
    <property type="evidence" value="ECO:0007669"/>
    <property type="project" value="Ensembl"/>
</dbReference>
<dbReference type="GO" id="GO:0001975">
    <property type="term" value="P:response to amphetamine"/>
    <property type="evidence" value="ECO:0007669"/>
    <property type="project" value="Ensembl"/>
</dbReference>
<dbReference type="GO" id="GO:0035902">
    <property type="term" value="P:response to immobilization stress"/>
    <property type="evidence" value="ECO:0007669"/>
    <property type="project" value="Ensembl"/>
</dbReference>
<dbReference type="GO" id="GO:1904373">
    <property type="term" value="P:response to kainic acid"/>
    <property type="evidence" value="ECO:0007669"/>
    <property type="project" value="Ensembl"/>
</dbReference>
<dbReference type="GO" id="GO:1904386">
    <property type="term" value="P:response to L-phenylalanine derivative"/>
    <property type="evidence" value="ECO:0007669"/>
    <property type="project" value="Ensembl"/>
</dbReference>
<dbReference type="GO" id="GO:0035094">
    <property type="term" value="P:response to nicotine"/>
    <property type="evidence" value="ECO:0007669"/>
    <property type="project" value="Ensembl"/>
</dbReference>
<dbReference type="GO" id="GO:0034695">
    <property type="term" value="P:response to prostaglandin E"/>
    <property type="evidence" value="ECO:0007669"/>
    <property type="project" value="Ensembl"/>
</dbReference>
<dbReference type="GO" id="GO:0048545">
    <property type="term" value="P:response to steroid hormone"/>
    <property type="evidence" value="ECO:0007669"/>
    <property type="project" value="Ensembl"/>
</dbReference>
<dbReference type="GO" id="GO:0008380">
    <property type="term" value="P:RNA splicing"/>
    <property type="evidence" value="ECO:0000303"/>
    <property type="project" value="UniProtKB"/>
</dbReference>
<dbReference type="CDD" id="cd06790">
    <property type="entry name" value="PDZ_neurabin-like"/>
    <property type="match status" value="1"/>
</dbReference>
<dbReference type="FunFam" id="2.30.42.10:FF:000010">
    <property type="entry name" value="Neurabin-1 isoform 1"/>
    <property type="match status" value="1"/>
</dbReference>
<dbReference type="Gene3D" id="2.30.42.10">
    <property type="match status" value="1"/>
</dbReference>
<dbReference type="InterPro" id="IPR040645">
    <property type="entry name" value="Neurabin-1/2_PDZ"/>
</dbReference>
<dbReference type="InterPro" id="IPR043446">
    <property type="entry name" value="Neurabin-like"/>
</dbReference>
<dbReference type="InterPro" id="IPR001478">
    <property type="entry name" value="PDZ"/>
</dbReference>
<dbReference type="InterPro" id="IPR036034">
    <property type="entry name" value="PDZ_sf"/>
</dbReference>
<dbReference type="PANTHER" id="PTHR16154">
    <property type="entry name" value="NEURABIN"/>
    <property type="match status" value="1"/>
</dbReference>
<dbReference type="PANTHER" id="PTHR16154:SF24">
    <property type="entry name" value="NEURABIN-2"/>
    <property type="match status" value="1"/>
</dbReference>
<dbReference type="Pfam" id="PF00595">
    <property type="entry name" value="PDZ"/>
    <property type="match status" value="1"/>
</dbReference>
<dbReference type="Pfam" id="PF17817">
    <property type="entry name" value="PDZ_5"/>
    <property type="match status" value="1"/>
</dbReference>
<dbReference type="SMART" id="SM00228">
    <property type="entry name" value="PDZ"/>
    <property type="match status" value="1"/>
</dbReference>
<dbReference type="SUPFAM" id="SSF50156">
    <property type="entry name" value="PDZ domain-like"/>
    <property type="match status" value="1"/>
</dbReference>
<dbReference type="PROSITE" id="PS50106">
    <property type="entry name" value="PDZ"/>
    <property type="match status" value="1"/>
</dbReference>
<keyword id="KW-0009">Actin-binding</keyword>
<keyword id="KW-0965">Cell junction</keyword>
<keyword id="KW-1003">Cell membrane</keyword>
<keyword id="KW-0966">Cell projection</keyword>
<keyword id="KW-0175">Coiled coil</keyword>
<keyword id="KW-0963">Cytoplasm</keyword>
<keyword id="KW-0206">Cytoskeleton</keyword>
<keyword id="KW-0217">Developmental protein</keyword>
<keyword id="KW-0221">Differentiation</keyword>
<keyword id="KW-0472">Membrane</keyword>
<keyword id="KW-0524">Neurogenesis</keyword>
<keyword id="KW-0539">Nucleus</keyword>
<keyword id="KW-0597">Phosphoprotein</keyword>
<keyword id="KW-1267">Proteomics identification</keyword>
<keyword id="KW-1185">Reference proteome</keyword>
<keyword id="KW-0770">Synapse</keyword>
<name>NEB2_HUMAN</name>
<reference key="1">
    <citation type="journal article" date="2001" name="J. Biol. Chem.">
        <title>The human tumor suppressor ARF interacts with spinophilin/neurabin II, a type 1 protein-phosphatase-binding protein.</title>
        <authorList>
            <person name="Vivo M."/>
            <person name="Calogero R.A."/>
            <person name="Sansone F."/>
            <person name="Calabro V."/>
            <person name="Parisi T."/>
            <person name="Borrelli L."/>
            <person name="Saviozzi S."/>
            <person name="La Mantia G."/>
        </authorList>
    </citation>
    <scope>NUCLEOTIDE SEQUENCE [MRNA]</scope>
    <scope>SUBCELLULAR LOCATION</scope>
    <scope>INTERACTION WITH CDKN2A</scope>
</reference>
<reference key="2">
    <citation type="journal article" date="2006" name="Nature">
        <title>DNA sequence of human chromosome 17 and analysis of rearrangement in the human lineage.</title>
        <authorList>
            <person name="Zody M.C."/>
            <person name="Garber M."/>
            <person name="Adams D.J."/>
            <person name="Sharpe T."/>
            <person name="Harrow J."/>
            <person name="Lupski J.R."/>
            <person name="Nicholson C."/>
            <person name="Searle S.M."/>
            <person name="Wilming L."/>
            <person name="Young S.K."/>
            <person name="Abouelleil A."/>
            <person name="Allen N.R."/>
            <person name="Bi W."/>
            <person name="Bloom T."/>
            <person name="Borowsky M.L."/>
            <person name="Bugalter B.E."/>
            <person name="Butler J."/>
            <person name="Chang J.L."/>
            <person name="Chen C.-K."/>
            <person name="Cook A."/>
            <person name="Corum B."/>
            <person name="Cuomo C.A."/>
            <person name="de Jong P.J."/>
            <person name="DeCaprio D."/>
            <person name="Dewar K."/>
            <person name="FitzGerald M."/>
            <person name="Gilbert J."/>
            <person name="Gibson R."/>
            <person name="Gnerre S."/>
            <person name="Goldstein S."/>
            <person name="Grafham D.V."/>
            <person name="Grocock R."/>
            <person name="Hafez N."/>
            <person name="Hagopian D.S."/>
            <person name="Hart E."/>
            <person name="Norman C.H."/>
            <person name="Humphray S."/>
            <person name="Jaffe D.B."/>
            <person name="Jones M."/>
            <person name="Kamal M."/>
            <person name="Khodiyar V.K."/>
            <person name="LaButti K."/>
            <person name="Laird G."/>
            <person name="Lehoczky J."/>
            <person name="Liu X."/>
            <person name="Lokyitsang T."/>
            <person name="Loveland J."/>
            <person name="Lui A."/>
            <person name="Macdonald P."/>
            <person name="Major J.E."/>
            <person name="Matthews L."/>
            <person name="Mauceli E."/>
            <person name="McCarroll S.A."/>
            <person name="Mihalev A.H."/>
            <person name="Mudge J."/>
            <person name="Nguyen C."/>
            <person name="Nicol R."/>
            <person name="O'Leary S.B."/>
            <person name="Osoegawa K."/>
            <person name="Schwartz D.C."/>
            <person name="Shaw-Smith C."/>
            <person name="Stankiewicz P."/>
            <person name="Steward C."/>
            <person name="Swarbreck D."/>
            <person name="Venkataraman V."/>
            <person name="Whittaker C.A."/>
            <person name="Yang X."/>
            <person name="Zimmer A.R."/>
            <person name="Bradley A."/>
            <person name="Hubbard T."/>
            <person name="Birren B.W."/>
            <person name="Rogers J."/>
            <person name="Lander E.S."/>
            <person name="Nusbaum C."/>
        </authorList>
    </citation>
    <scope>NUCLEOTIDE SEQUENCE [LARGE SCALE GENOMIC DNA]</scope>
</reference>
<reference key="3">
    <citation type="submission" date="2005-09" db="EMBL/GenBank/DDBJ databases">
        <authorList>
            <person name="Mural R.J."/>
            <person name="Istrail S."/>
            <person name="Sutton G.G."/>
            <person name="Florea L."/>
            <person name="Halpern A.L."/>
            <person name="Mobarry C.M."/>
            <person name="Lippert R."/>
            <person name="Walenz B."/>
            <person name="Shatkay H."/>
            <person name="Dew I."/>
            <person name="Miller J.R."/>
            <person name="Flanigan M.J."/>
            <person name="Edwards N.J."/>
            <person name="Bolanos R."/>
            <person name="Fasulo D."/>
            <person name="Halldorsson B.V."/>
            <person name="Hannenhalli S."/>
            <person name="Turner R."/>
            <person name="Yooseph S."/>
            <person name="Lu F."/>
            <person name="Nusskern D.R."/>
            <person name="Shue B.C."/>
            <person name="Zheng X.H."/>
            <person name="Zhong F."/>
            <person name="Delcher A.L."/>
            <person name="Huson D.H."/>
            <person name="Kravitz S.A."/>
            <person name="Mouchard L."/>
            <person name="Reinert K."/>
            <person name="Remington K.A."/>
            <person name="Clark A.G."/>
            <person name="Waterman M.S."/>
            <person name="Eichler E.E."/>
            <person name="Adams M.D."/>
            <person name="Hunkapiller M.W."/>
            <person name="Myers E.W."/>
            <person name="Venter J.C."/>
        </authorList>
    </citation>
    <scope>NUCLEOTIDE SEQUENCE [LARGE SCALE GENOMIC DNA]</scope>
</reference>
<reference key="4">
    <citation type="journal article" date="2007" name="BMC Genomics">
        <title>The full-ORF clone resource of the German cDNA consortium.</title>
        <authorList>
            <person name="Bechtel S."/>
            <person name="Rosenfelder H."/>
            <person name="Duda A."/>
            <person name="Schmidt C.P."/>
            <person name="Ernst U."/>
            <person name="Wellenreuther R."/>
            <person name="Mehrle A."/>
            <person name="Schuster C."/>
            <person name="Bahr A."/>
            <person name="Bloecker H."/>
            <person name="Heubner D."/>
            <person name="Hoerlein A."/>
            <person name="Michel G."/>
            <person name="Wedler H."/>
            <person name="Koehrer K."/>
            <person name="Ottenwaelder B."/>
            <person name="Poustka A."/>
            <person name="Wiemann S."/>
            <person name="Schupp I."/>
        </authorList>
    </citation>
    <scope>NUCLEOTIDE SEQUENCE [LARGE SCALE MRNA] OF 398-817</scope>
    <source>
        <tissue>Amygdala</tissue>
    </source>
</reference>
<reference key="5">
    <citation type="journal article" date="2008" name="Proc. Natl. Acad. Sci. U.S.A.">
        <title>A quantitative atlas of mitotic phosphorylation.</title>
        <authorList>
            <person name="Dephoure N."/>
            <person name="Zhou C."/>
            <person name="Villen J."/>
            <person name="Beausoleil S.A."/>
            <person name="Bakalarski C.E."/>
            <person name="Elledge S.J."/>
            <person name="Gygi S.P."/>
        </authorList>
    </citation>
    <scope>PHOSPHORYLATION [LARGE SCALE ANALYSIS] AT SER-205</scope>
    <scope>IDENTIFICATION BY MASS SPECTROMETRY [LARGE SCALE ANALYSIS]</scope>
    <source>
        <tissue>Cervix carcinoma</tissue>
    </source>
</reference>
<reference key="6">
    <citation type="journal article" date="2009" name="Anal. Chem.">
        <title>Lys-N and trypsin cover complementary parts of the phosphoproteome in a refined SCX-based approach.</title>
        <authorList>
            <person name="Gauci S."/>
            <person name="Helbig A.O."/>
            <person name="Slijper M."/>
            <person name="Krijgsveld J."/>
            <person name="Heck A.J."/>
            <person name="Mohammed S."/>
        </authorList>
    </citation>
    <scope>IDENTIFICATION BY MASS SPECTROMETRY [LARGE SCALE ANALYSIS]</scope>
</reference>
<reference key="7">
    <citation type="journal article" date="2009" name="Oncogene">
        <title>Asef2 and Neurabin2 cooperatively regulate actin cytoskeletal organization and are involved in HGF-induced cell migration.</title>
        <authorList>
            <person name="Sagara M."/>
            <person name="Kawasaki Y."/>
            <person name="Iemura S.I."/>
            <person name="Natsume T."/>
            <person name="Takai Y."/>
            <person name="Akiyama T."/>
        </authorList>
    </citation>
    <scope>FUNCTION</scope>
    <scope>SUBCELLULAR LOCATION</scope>
    <scope>INTERACTION WITH SPATA13</scope>
</reference>
<reference key="8">
    <citation type="journal article" date="2009" name="Sci. Signal.">
        <title>Quantitative phosphoproteomic analysis of T cell receptor signaling reveals system-wide modulation of protein-protein interactions.</title>
        <authorList>
            <person name="Mayya V."/>
            <person name="Lundgren D.H."/>
            <person name="Hwang S.-I."/>
            <person name="Rezaul K."/>
            <person name="Wu L."/>
            <person name="Eng J.K."/>
            <person name="Rodionov V."/>
            <person name="Han D.K."/>
        </authorList>
    </citation>
    <scope>PHOSPHORYLATION [LARGE SCALE ANALYSIS] AT SER-205</scope>
    <scope>IDENTIFICATION BY MASS SPECTROMETRY [LARGE SCALE ANALYSIS]</scope>
    <source>
        <tissue>Leukemic T-cell</tissue>
    </source>
</reference>
<reference key="9">
    <citation type="journal article" date="2010" name="Sci. Signal.">
        <title>Quantitative phosphoproteomics reveals widespread full phosphorylation site occupancy during mitosis.</title>
        <authorList>
            <person name="Olsen J.V."/>
            <person name="Vermeulen M."/>
            <person name="Santamaria A."/>
            <person name="Kumar C."/>
            <person name="Miller M.L."/>
            <person name="Jensen L.J."/>
            <person name="Gnad F."/>
            <person name="Cox J."/>
            <person name="Jensen T.S."/>
            <person name="Nigg E.A."/>
            <person name="Brunak S."/>
            <person name="Mann M."/>
        </authorList>
    </citation>
    <scope>PHOSPHORYLATION [LARGE SCALE ANALYSIS] AT SER-205</scope>
    <scope>IDENTIFICATION BY MASS SPECTROMETRY [LARGE SCALE ANALYSIS]</scope>
    <source>
        <tissue>Cervix carcinoma</tissue>
    </source>
</reference>
<reference key="10">
    <citation type="journal article" date="2011" name="Sci. Signal.">
        <title>System-wide temporal characterization of the proteome and phosphoproteome of human embryonic stem cell differentiation.</title>
        <authorList>
            <person name="Rigbolt K.T."/>
            <person name="Prokhorova T.A."/>
            <person name="Akimov V."/>
            <person name="Henningsen J."/>
            <person name="Johansen P.T."/>
            <person name="Kratchmarova I."/>
            <person name="Kassem M."/>
            <person name="Mann M."/>
            <person name="Olsen J.V."/>
            <person name="Blagoev B."/>
        </authorList>
    </citation>
    <scope>PHOSPHORYLATION [LARGE SCALE ANALYSIS] AT SER-192</scope>
    <scope>IDENTIFICATION BY MASS SPECTROMETRY [LARGE SCALE ANALYSIS]</scope>
</reference>
<reference key="11">
    <citation type="journal article" date="2013" name="J. Proteome Res.">
        <title>Toward a comprehensive characterization of a human cancer cell phosphoproteome.</title>
        <authorList>
            <person name="Zhou H."/>
            <person name="Di Palma S."/>
            <person name="Preisinger C."/>
            <person name="Peng M."/>
            <person name="Polat A.N."/>
            <person name="Heck A.J."/>
            <person name="Mohammed S."/>
        </authorList>
    </citation>
    <scope>PHOSPHORYLATION [LARGE SCALE ANALYSIS] AT SER-192 AND THR-193</scope>
    <scope>IDENTIFICATION BY MASS SPECTROMETRY [LARGE SCALE ANALYSIS]</scope>
    <source>
        <tissue>Cervix carcinoma</tissue>
        <tissue>Erythroleukemia</tissue>
    </source>
</reference>
<reference key="12">
    <citation type="journal article" date="2014" name="Ann. Neurol.">
        <title>The alpha2B-adrenergic receptor is mutant in cortical myoclonus and epilepsy.</title>
        <authorList>
            <person name="De Fusco M."/>
            <person name="Vago R."/>
            <person name="Striano P."/>
            <person name="Di Bonaventura C."/>
            <person name="Zara F."/>
            <person name="Mei D."/>
            <person name="Kim M.S."/>
            <person name="Muallem S."/>
            <person name="Chen Y."/>
            <person name="Wang Q."/>
            <person name="Guerrini R."/>
            <person name="Casari G."/>
        </authorList>
    </citation>
    <scope>INTERACTION WITH ADRA2B</scope>
</reference>
<reference key="13">
    <citation type="journal article" date="2014" name="J. Proteomics">
        <title>An enzyme assisted RP-RPLC approach for in-depth analysis of human liver phosphoproteome.</title>
        <authorList>
            <person name="Bian Y."/>
            <person name="Song C."/>
            <person name="Cheng K."/>
            <person name="Dong M."/>
            <person name="Wang F."/>
            <person name="Huang J."/>
            <person name="Sun D."/>
            <person name="Wang L."/>
            <person name="Ye M."/>
            <person name="Zou H."/>
        </authorList>
    </citation>
    <scope>PHOSPHORYLATION [LARGE SCALE ANALYSIS] AT THR-207; SER-438 AND SER-658</scope>
    <scope>IDENTIFICATION BY MASS SPECTROMETRY [LARGE SCALE ANALYSIS]</scope>
    <source>
        <tissue>Liver</tissue>
    </source>
</reference>
<protein>
    <recommendedName>
        <fullName>Neurabin-2</fullName>
    </recommendedName>
    <alternativeName>
        <fullName>Neurabin-II</fullName>
    </alternativeName>
    <alternativeName>
        <fullName>Protein phosphatase 1 regulatory subunit 9B</fullName>
    </alternativeName>
    <alternativeName>
        <fullName>Spinophilin</fullName>
    </alternativeName>
</protein>
<feature type="chain" id="PRO_0000228614" description="Neurabin-2">
    <location>
        <begin position="1"/>
        <end position="817"/>
    </location>
</feature>
<feature type="domain" description="PDZ" evidence="5">
    <location>
        <begin position="496"/>
        <end position="584"/>
    </location>
</feature>
<feature type="region of interest" description="Disordered" evidence="6">
    <location>
        <begin position="1"/>
        <end position="165"/>
    </location>
</feature>
<feature type="region of interest" description="Actin-binding" evidence="1">
    <location>
        <begin position="1"/>
        <end position="154"/>
    </location>
</feature>
<feature type="region of interest" description="Interaction with D(2) dopamine receptor" evidence="1">
    <location>
        <begin position="100"/>
        <end position="371"/>
    </location>
</feature>
<feature type="region of interest" description="Actin-binding" evidence="1">
    <location>
        <begin position="164"/>
        <end position="283"/>
    </location>
</feature>
<feature type="region of interest" description="Interaction with ADRA2A, ADRA2B and ADRA2C" evidence="1">
    <location>
        <begin position="169"/>
        <end position="255"/>
    </location>
</feature>
<feature type="region of interest" description="Disordered" evidence="6">
    <location>
        <begin position="216"/>
        <end position="447"/>
    </location>
</feature>
<feature type="region of interest" description="Interaction with protein phosphatase 1" evidence="1">
    <location>
        <begin position="417"/>
        <end position="494"/>
    </location>
</feature>
<feature type="region of interest" description="Interaction with RGS2" evidence="1">
    <location>
        <begin position="480"/>
        <end position="525"/>
    </location>
</feature>
<feature type="region of interest" description="Interaction with TGN38" evidence="1">
    <location>
        <begin position="595"/>
        <end position="816"/>
    </location>
</feature>
<feature type="coiled-coil region" evidence="4">
    <location>
        <begin position="671"/>
        <end position="788"/>
    </location>
</feature>
<feature type="short sequence motif" description="PP1-binding motif" evidence="2">
    <location>
        <begin position="447"/>
        <end position="451"/>
    </location>
</feature>
<feature type="compositionally biased region" description="Basic residues" evidence="6">
    <location>
        <begin position="44"/>
        <end position="58"/>
    </location>
</feature>
<feature type="compositionally biased region" description="Pro residues" evidence="6">
    <location>
        <begin position="131"/>
        <end position="141"/>
    </location>
</feature>
<feature type="compositionally biased region" description="Pro residues" evidence="6">
    <location>
        <begin position="252"/>
        <end position="261"/>
    </location>
</feature>
<feature type="compositionally biased region" description="Basic and acidic residues" evidence="6">
    <location>
        <begin position="291"/>
        <end position="302"/>
    </location>
</feature>
<feature type="compositionally biased region" description="Low complexity" evidence="6">
    <location>
        <begin position="333"/>
        <end position="342"/>
    </location>
</feature>
<feature type="compositionally biased region" description="Basic and acidic residues" evidence="6">
    <location>
        <begin position="344"/>
        <end position="356"/>
    </location>
</feature>
<feature type="compositionally biased region" description="Acidic residues" evidence="6">
    <location>
        <begin position="410"/>
        <end position="425"/>
    </location>
</feature>
<feature type="modified residue" description="Phosphoserine" evidence="3">
    <location>
        <position position="15"/>
    </location>
</feature>
<feature type="modified residue" description="Phosphoserine" evidence="3">
    <location>
        <position position="17"/>
    </location>
</feature>
<feature type="modified residue" description="Phosphoserine" evidence="3">
    <location>
        <position position="94"/>
    </location>
</feature>
<feature type="modified residue" description="Phosphoserine" evidence="2">
    <location>
        <position position="100"/>
    </location>
</feature>
<feature type="modified residue" description="Phosphoserine" evidence="2">
    <location>
        <position position="116"/>
    </location>
</feature>
<feature type="modified residue" description="Phosphoserine" evidence="14 15">
    <location>
        <position position="192"/>
    </location>
</feature>
<feature type="modified residue" description="Phosphothreonine" evidence="15">
    <location>
        <position position="193"/>
    </location>
</feature>
<feature type="modified residue" description="Phosphoserine" evidence="11 12 13">
    <location>
        <position position="205"/>
    </location>
</feature>
<feature type="modified residue" description="Phosphothreonine" evidence="16">
    <location>
        <position position="207"/>
    </location>
</feature>
<feature type="modified residue" description="Phosphoserine" evidence="16">
    <location>
        <position position="438"/>
    </location>
</feature>
<feature type="modified residue" description="Phosphoserine" evidence="16">
    <location>
        <position position="658"/>
    </location>
</feature>
<feature type="sequence variant" id="VAR_059776" description="In dbSNP:rs8079707.">
    <original>A</original>
    <variation>T</variation>
    <location>
        <position position="201"/>
    </location>
</feature>
<feature type="sequence conflict" description="In Ref. 1; CAC37685." evidence="10" ref="1">
    <original>A</original>
    <variation>G</variation>
    <location>
        <position position="159"/>
    </location>
</feature>
<feature type="sequence conflict" description="In Ref. 1; CAC37685." evidence="10" ref="1">
    <location>
        <position position="161"/>
    </location>
</feature>
<feature type="sequence conflict" description="In Ref. 1; CAC37685." evidence="10" ref="1">
    <location>
        <position position="165"/>
    </location>
</feature>
<feature type="sequence conflict" description="In Ref. 1; CAC37685." evidence="10" ref="1">
    <original>V</original>
    <variation>VRC</variation>
    <location>
        <position position="576"/>
    </location>
</feature>
<accession>Q96SB3</accession>
<accession>D3DTX6</accession>
<accession>Q8TCR9</accession>
<gene>
    <name type="primary">PPP1R9B</name>
    <name type="synonym">PPP1R6</name>
</gene>
<evidence type="ECO:0000250" key="1"/>
<evidence type="ECO:0000250" key="2">
    <source>
        <dbReference type="UniProtKB" id="O35274"/>
    </source>
</evidence>
<evidence type="ECO:0000250" key="3">
    <source>
        <dbReference type="UniProtKB" id="Q6R891"/>
    </source>
</evidence>
<evidence type="ECO:0000255" key="4"/>
<evidence type="ECO:0000255" key="5">
    <source>
        <dbReference type="PROSITE-ProRule" id="PRU00143"/>
    </source>
</evidence>
<evidence type="ECO:0000256" key="6">
    <source>
        <dbReference type="SAM" id="MobiDB-lite"/>
    </source>
</evidence>
<evidence type="ECO:0000269" key="7">
    <source>
    </source>
</evidence>
<evidence type="ECO:0000269" key="8">
    <source>
    </source>
</evidence>
<evidence type="ECO:0000269" key="9">
    <source>
    </source>
</evidence>
<evidence type="ECO:0000305" key="10"/>
<evidence type="ECO:0007744" key="11">
    <source>
    </source>
</evidence>
<evidence type="ECO:0007744" key="12">
    <source>
    </source>
</evidence>
<evidence type="ECO:0007744" key="13">
    <source>
    </source>
</evidence>
<evidence type="ECO:0007744" key="14">
    <source>
    </source>
</evidence>
<evidence type="ECO:0007744" key="15">
    <source>
    </source>
</evidence>
<evidence type="ECO:0007744" key="16">
    <source>
    </source>
</evidence>
<organism>
    <name type="scientific">Homo sapiens</name>
    <name type="common">Human</name>
    <dbReference type="NCBI Taxonomy" id="9606"/>
    <lineage>
        <taxon>Eukaryota</taxon>
        <taxon>Metazoa</taxon>
        <taxon>Chordata</taxon>
        <taxon>Craniata</taxon>
        <taxon>Vertebrata</taxon>
        <taxon>Euteleostomi</taxon>
        <taxon>Mammalia</taxon>
        <taxon>Eutheria</taxon>
        <taxon>Euarchontoglires</taxon>
        <taxon>Primates</taxon>
        <taxon>Haplorrhini</taxon>
        <taxon>Catarrhini</taxon>
        <taxon>Hominidae</taxon>
        <taxon>Homo</taxon>
    </lineage>
</organism>
<sequence length="817" mass="89334">MMKTEPRGPGGPLRSASPHRSAYEAGIQALKPPDAPGPDEAPKGAHHKKYGSNVHRIKSMFLQMGTTAGPSGEAGGGAGLAEAPRASERGVRLSLPRASSLNENVDHSALLKLGTSVSERVSRFDSKPAPSAQPAPPPHPPSRLQETRKLFERSAPAAAGGDKEAAARRLLRQERAGLQDRKLDVVVRFNGSTEALDKLDADAVSPTVSQLSAVFEKADSRTGLHRGPGLPRAAGVPQVNSKLVSKRSRVFQPPPPPPPAPSGDAPAEKERCPAGQQPPQHRVAPARPPPKPREVRKIKPVEVEESGESEAESAPGEVIQAEVTVHAALENGSTVATAASPAPEEPKAQAAPEKEAAAVAPPERGVGNGRAPDVAPEEVDESKKEDFSEADLVDVSAYSGLGEDSAGSALEEDDEDDEEDGEPPYEPESGCVEIPGLSEEEDPAPSRKIHFSTAPIQVFSTYSNEDYDRRNEDVDPMAASAEYELEKRVERLELFPVELEKDSEGLGISIIGMGAGADMGLEKLGIFVKTVTEGGAAHRDGRIQVNDLLVEVDGTSLVGVTQSFAASVLRNTKGRVRFMIGRERPGEQSEVAQLIQQTLEQERWQREMMEQRYAQYGEDDEETGEYATDEDEELSPTFPGGEMAIEVFELAENEDALSPVDMEPEKLVHKFKELQIKHAVTEAEIQQLKRKLQSLEQEKGRWRVEKAQLEQSVEENKERMEKLEGYWGEAQSLCQAVDEHLRETQAQYQALERKYSKAKRLIKDYQQKEIEFLKKETAQRRVLEESELARKEEMDKLLDKISELEGNLQTLRNSNST</sequence>
<proteinExistence type="evidence at protein level"/>
<comment type="function">
    <text evidence="1 8">Seems to act as a scaffold protein in multiple signaling pathways. Modulates excitatory synaptic transmission and dendritic spine morphology. Binds to actin filaments (F-actin) and shows cross-linking activity. Binds along the sides of the F-actin. May play an important role in linking the actin cytoskeleton to the plasma membrane at the synaptic junction. Believed to target protein phosphatase 1/PP1 to dendritic spines, which are rich in F-actin, and regulates its specificity toward ion channels and other substrates, such as AMPA-type and NMDA-type glutamate receptors. Plays a role in regulation of G-protein coupled receptor signaling, including dopamine D2 receptors and alpha-adrenergic receptors. May establish a signaling complex for dopaminergic neurotransmission through D2 receptors by linking receptors downstream signaling molecules and the actin cytoskeleton. Binds to ADRA1B and RGS2 and mediates regulation of ADRA1B signaling. May confer to Rac signaling specificity by binding to both, RacGEFs and Rac effector proteins. Probably regulates p70 S6 kinase activity by forming a complex with TIAM1 (By similarity). Required for hepatocyte growth factor (HGF)-induced cell migration.</text>
</comment>
<comment type="subunit">
    <text evidence="3 7 8 9">Interacts with DCLK2 (By similarity). Possibly exists as a homodimer, homotrimer or a homotetramer. Interacts with F-actin, PPP1CA, neurabin-1, TGN38 and D(2) dopamine receptor. Interacts with RGS1, RGS2, RGS4, RGS19 and ADRA1B, ADRA2A, ADRA2B, ADRA2C, CDKN2A, PPP1R2, RASGFR1 and TIAM1. Interacts (via C-terminus) with SPATA13 (via C-terminal tail). Interacts with ADRA2B.</text>
</comment>
<comment type="interaction">
    <interactant intactId="EBI-351275">
        <id>Q96SB3</id>
    </interactant>
    <interactant intactId="EBI-349905">
        <id>P38398</id>
        <label>BRCA1</label>
    </interactant>
    <organismsDiffer>false</organismsDiffer>
    <experiments>4</experiments>
</comment>
<comment type="interaction">
    <interactant intactId="EBI-351275">
        <id>Q96SB3</id>
    </interactant>
    <interactant intactId="EBI-357253">
        <id>P62136</id>
        <label>PPP1CA</label>
    </interactant>
    <organismsDiffer>false</organismsDiffer>
    <experiments>7</experiments>
</comment>
<comment type="interaction">
    <interactant intactId="EBI-351275">
        <id>Q96SB3</id>
    </interactant>
    <interactant intactId="EBI-352350">
        <id>P62140</id>
        <label>PPP1CB</label>
    </interactant>
    <organismsDiffer>false</organismsDiffer>
    <experiments>2</experiments>
</comment>
<comment type="interaction">
    <interactant intactId="EBI-351275">
        <id>Q96SB3</id>
    </interactant>
    <interactant intactId="EBI-356283">
        <id>P36873</id>
        <label>PPP1CC</label>
    </interactant>
    <organismsDiffer>false</organismsDiffer>
    <experiments>8</experiments>
</comment>
<comment type="subcellular location">
    <subcellularLocation>
        <location evidence="1">Cytoplasm</location>
        <location evidence="1">Cytoskeleton</location>
    </subcellularLocation>
    <subcellularLocation>
        <location evidence="1">Nucleus</location>
    </subcellularLocation>
    <subcellularLocation>
        <location evidence="2">Cell projection</location>
        <location evidence="2">Dendritic spine</location>
    </subcellularLocation>
    <subcellularLocation>
        <location evidence="2">Postsynaptic density</location>
    </subcellularLocation>
    <subcellularLocation>
        <location>Synapse</location>
    </subcellularLocation>
    <subcellularLocation>
        <location evidence="1">Cell junction</location>
        <location evidence="1">Adherens junction</location>
    </subcellularLocation>
    <subcellularLocation>
        <location>Cytoplasm</location>
    </subcellularLocation>
    <subcellularLocation>
        <location>Cell membrane</location>
    </subcellularLocation>
    <subcellularLocation>
        <location>Cell projection</location>
        <location>Lamellipodium</location>
    </subcellularLocation>
    <subcellularLocation>
        <location>Cell projection</location>
        <location>Filopodium</location>
    </subcellularLocation>
    <subcellularLocation>
        <location>Cell projection</location>
        <location>Ruffle membrane</location>
    </subcellularLocation>
    <text evidence="1">Enriched at synapse and cadherin-based cell-cell adhesion sites. In neurons, both cytosolic and membrane-associated, and highly enriched in the postsynaptic density apposed to exitatory synapses. Colocalizes with PPP1R2 at actin-rich adherens junctions in epithelial cells and in dendritic spines (By similarity). Accumulates in the lamellipodium, filopodium and ruffle membrane in response to hepatocyte growth factor (HGF) treatment.</text>
</comment>
<comment type="domain">
    <text evidence="1">The PP1 binding region is natively unstructured, upon PP1 binding, it acquires structure, blocks a substrate-binding site, and restricts PP1 phosphatase specificity to a subset of substrates.</text>
</comment>
<comment type="PTM">
    <text evidence="1">Stimulation of D1 (but not D2) dopamine receptors induces Ser-94 phosphorylation. Dephosphorylation of Ser-94 is mediated mainly by PP1 and to a lesser extent by PP2A. Phosphorylation of spinophilin disrupts its association with F-actin, but does not affect its binding to PP1 (By similarity).</text>
</comment>
<comment type="online information" name="Atlas of Genetics and Cytogenetics in Oncology and Haematology">
    <link uri="https://atlasgeneticsoncology.org/gene/51558/PPP1R9B"/>
</comment>